<proteinExistence type="inferred from homology"/>
<keyword id="KW-0488">Methylation</keyword>
<keyword id="KW-0687">Ribonucleoprotein</keyword>
<keyword id="KW-0689">Ribosomal protein</keyword>
<keyword id="KW-0694">RNA-binding</keyword>
<keyword id="KW-0699">rRNA-binding</keyword>
<keyword id="KW-0820">tRNA-binding</keyword>
<sequence length="88" mass="9795">RKGRRDKIGKVKTAALKGSPQRRGVCTRVYTTTPKKPNSALRKVARVKLTSQVEVTAYIPGEAHNLQEHSMVLVRGGRVKDLPGVRYK</sequence>
<comment type="function">
    <text evidence="1">With S4 and S5 plays an important role in translational accuracy.</text>
</comment>
<comment type="function">
    <text evidence="1">Interacts with and stabilizes bases of the 16S rRNA that are involved in tRNA selection in the A site and with the mRNA backbone. Located at the interface of the 30S and 50S subunits, it traverses the body of the 30S subunit contacting proteins on the other side and probably holding the rRNA structure together. The combined cluster of proteins S8, S12 and S17 appears to hold together the shoulder and platform of the 30S subunit (By similarity).</text>
</comment>
<comment type="subunit">
    <text evidence="1">Part of the 30S ribosomal subunit. Contacts proteins S8 and S17. May interact with IF1 in the 30S initiation complex (By similarity).</text>
</comment>
<comment type="similarity">
    <text evidence="3">Belongs to the universal ribosomal protein uS12 family.</text>
</comment>
<gene>
    <name type="primary">rpsL</name>
</gene>
<evidence type="ECO:0000250" key="1"/>
<evidence type="ECO:0000256" key="2">
    <source>
        <dbReference type="SAM" id="MobiDB-lite"/>
    </source>
</evidence>
<evidence type="ECO:0000305" key="3"/>
<dbReference type="EMBL" id="X80121">
    <property type="protein sequence ID" value="CAB56848.1"/>
    <property type="molecule type" value="Genomic_DNA"/>
</dbReference>
<dbReference type="SMR" id="P52001"/>
<dbReference type="STRING" id="1787.A5725_03640"/>
<dbReference type="GO" id="GO:0015935">
    <property type="term" value="C:small ribosomal subunit"/>
    <property type="evidence" value="ECO:0007669"/>
    <property type="project" value="InterPro"/>
</dbReference>
<dbReference type="GO" id="GO:0019843">
    <property type="term" value="F:rRNA binding"/>
    <property type="evidence" value="ECO:0007669"/>
    <property type="project" value="UniProtKB-KW"/>
</dbReference>
<dbReference type="GO" id="GO:0003735">
    <property type="term" value="F:structural constituent of ribosome"/>
    <property type="evidence" value="ECO:0007669"/>
    <property type="project" value="InterPro"/>
</dbReference>
<dbReference type="GO" id="GO:0000049">
    <property type="term" value="F:tRNA binding"/>
    <property type="evidence" value="ECO:0007669"/>
    <property type="project" value="UniProtKB-KW"/>
</dbReference>
<dbReference type="GO" id="GO:0006412">
    <property type="term" value="P:translation"/>
    <property type="evidence" value="ECO:0007669"/>
    <property type="project" value="InterPro"/>
</dbReference>
<dbReference type="CDD" id="cd03368">
    <property type="entry name" value="Ribosomal_S12"/>
    <property type="match status" value="1"/>
</dbReference>
<dbReference type="Gene3D" id="2.40.50.140">
    <property type="entry name" value="Nucleic acid-binding proteins"/>
    <property type="match status" value="1"/>
</dbReference>
<dbReference type="InterPro" id="IPR012340">
    <property type="entry name" value="NA-bd_OB-fold"/>
</dbReference>
<dbReference type="InterPro" id="IPR006032">
    <property type="entry name" value="Ribosomal_uS12"/>
</dbReference>
<dbReference type="InterPro" id="IPR005679">
    <property type="entry name" value="Ribosomal_uS12_bac"/>
</dbReference>
<dbReference type="NCBIfam" id="TIGR00981">
    <property type="entry name" value="rpsL_bact"/>
    <property type="match status" value="1"/>
</dbReference>
<dbReference type="PANTHER" id="PTHR11652">
    <property type="entry name" value="30S RIBOSOMAL PROTEIN S12 FAMILY MEMBER"/>
    <property type="match status" value="1"/>
</dbReference>
<dbReference type="Pfam" id="PF00164">
    <property type="entry name" value="Ribosom_S12_S23"/>
    <property type="match status" value="1"/>
</dbReference>
<dbReference type="PIRSF" id="PIRSF002133">
    <property type="entry name" value="Ribosomal_S12/S23"/>
    <property type="match status" value="1"/>
</dbReference>
<dbReference type="PRINTS" id="PR01034">
    <property type="entry name" value="RIBOSOMALS12"/>
</dbReference>
<dbReference type="SUPFAM" id="SSF50249">
    <property type="entry name" value="Nucleic acid-binding proteins"/>
    <property type="match status" value="1"/>
</dbReference>
<dbReference type="PROSITE" id="PS00055">
    <property type="entry name" value="RIBOSOMAL_S12"/>
    <property type="match status" value="1"/>
</dbReference>
<accession>P52001</accession>
<name>RS12_MYCSZ</name>
<feature type="chain" id="PRO_0000146271" description="Small ribosomal subunit protein uS12">
    <location>
        <begin position="1" status="less than"/>
        <end position="88" status="greater than"/>
    </location>
</feature>
<feature type="region of interest" description="Disordered" evidence="2">
    <location>
        <begin position="1"/>
        <end position="24"/>
    </location>
</feature>
<feature type="modified residue" description="3-methylthioaspartic acid" evidence="1">
    <location>
        <position position="81"/>
    </location>
</feature>
<feature type="non-terminal residue">
    <location>
        <position position="1"/>
    </location>
</feature>
<feature type="non-terminal residue">
    <location>
        <position position="88"/>
    </location>
</feature>
<organism>
    <name type="scientific">Mycobacterium szulgai</name>
    <dbReference type="NCBI Taxonomy" id="1787"/>
    <lineage>
        <taxon>Bacteria</taxon>
        <taxon>Bacillati</taxon>
        <taxon>Actinomycetota</taxon>
        <taxon>Actinomycetes</taxon>
        <taxon>Mycobacteriales</taxon>
        <taxon>Mycobacteriaceae</taxon>
        <taxon>Mycobacterium</taxon>
    </lineage>
</organism>
<reference key="1">
    <citation type="journal article" date="1994" name="Antimicrob. Agents Chemother.">
        <title>Streptomycin resistance in mycobacteria.</title>
        <authorList>
            <person name="Honore N."/>
            <person name="Cole S.T."/>
        </authorList>
    </citation>
    <scope>NUCLEOTIDE SEQUENCE [GENOMIC DNA]</scope>
    <source>
        <strain>CIPT 0240007</strain>
    </source>
</reference>
<protein>
    <recommendedName>
        <fullName evidence="3">Small ribosomal subunit protein uS12</fullName>
    </recommendedName>
    <alternativeName>
        <fullName>30S ribosomal protein S12</fullName>
    </alternativeName>
</protein>